<proteinExistence type="inferred from homology"/>
<name>NADK_PETMO</name>
<reference key="1">
    <citation type="submission" date="2007-11" db="EMBL/GenBank/DDBJ databases">
        <title>Complete sequence of Petroga mobilis SJ95.</title>
        <authorList>
            <consortium name="US DOE Joint Genome Institute"/>
            <person name="Copeland A."/>
            <person name="Lucas S."/>
            <person name="Lapidus A."/>
            <person name="Barry K."/>
            <person name="Glavina del Rio T."/>
            <person name="Dalin E."/>
            <person name="Tice H."/>
            <person name="Pitluck S."/>
            <person name="Meincke L."/>
            <person name="Brettin T."/>
            <person name="Bruce D."/>
            <person name="Detter J.C."/>
            <person name="Han C."/>
            <person name="Kuske C.R."/>
            <person name="Schmutz J."/>
            <person name="Larimer F."/>
            <person name="Land M."/>
            <person name="Hauser L."/>
            <person name="Kyrpides N."/>
            <person name="Mikhailova N."/>
            <person name="Noll K."/>
            <person name="Richardson P."/>
        </authorList>
    </citation>
    <scope>NUCLEOTIDE SEQUENCE [LARGE SCALE GENOMIC DNA]</scope>
    <source>
        <strain>DSM 10674 / SJ95</strain>
    </source>
</reference>
<accession>A9BHU3</accession>
<feature type="chain" id="PRO_1000079504" description="NAD kinase">
    <location>
        <begin position="1"/>
        <end position="274"/>
    </location>
</feature>
<feature type="active site" description="Proton acceptor" evidence="1">
    <location>
        <position position="59"/>
    </location>
</feature>
<feature type="binding site" evidence="1">
    <location>
        <begin position="59"/>
        <end position="60"/>
    </location>
    <ligand>
        <name>NAD(+)</name>
        <dbReference type="ChEBI" id="CHEBI:57540"/>
    </ligand>
</feature>
<feature type="binding site" evidence="1">
    <location>
        <position position="64"/>
    </location>
    <ligand>
        <name>NAD(+)</name>
        <dbReference type="ChEBI" id="CHEBI:57540"/>
    </ligand>
</feature>
<feature type="binding site" evidence="1">
    <location>
        <begin position="128"/>
        <end position="129"/>
    </location>
    <ligand>
        <name>NAD(+)</name>
        <dbReference type="ChEBI" id="CHEBI:57540"/>
    </ligand>
</feature>
<feature type="binding site" evidence="1">
    <location>
        <position position="158"/>
    </location>
    <ligand>
        <name>NAD(+)</name>
        <dbReference type="ChEBI" id="CHEBI:57540"/>
    </ligand>
</feature>
<feature type="binding site" evidence="1">
    <location>
        <begin position="169"/>
        <end position="174"/>
    </location>
    <ligand>
        <name>NAD(+)</name>
        <dbReference type="ChEBI" id="CHEBI:57540"/>
    </ligand>
</feature>
<feature type="binding site" evidence="1">
    <location>
        <position position="193"/>
    </location>
    <ligand>
        <name>NAD(+)</name>
        <dbReference type="ChEBI" id="CHEBI:57540"/>
    </ligand>
</feature>
<sequence>MKIFIFYNPLKLSNDDLEENILKPFNESNIEVIGYAAAGSTVEEKQAQVADFFVIFGGDGTVLKIAEIAAIFSKPVIAVNTGNLGFLSSYSSSEIKELIEDIQKENISFSFRHLLECHVGTKKVVVLNDIVLLKSQPLGTMNVDVKIEEHTLFSFAGDGLIVSTPTGSTAYALSAGGPIIHPELNVVQLIPLAAHALNIRPFIAPPTQRIEIILKNMSKGFVYVTGDGDIIHRMEPGMSIFVTSSEMTIKLAQRNGNNYLNALDKKLGFGRRFE</sequence>
<comment type="function">
    <text evidence="1">Involved in the regulation of the intracellular balance of NAD and NADP, and is a key enzyme in the biosynthesis of NADP. Catalyzes specifically the phosphorylation on 2'-hydroxyl of the adenosine moiety of NAD to yield NADP.</text>
</comment>
<comment type="catalytic activity">
    <reaction evidence="1">
        <text>NAD(+) + ATP = ADP + NADP(+) + H(+)</text>
        <dbReference type="Rhea" id="RHEA:18629"/>
        <dbReference type="ChEBI" id="CHEBI:15378"/>
        <dbReference type="ChEBI" id="CHEBI:30616"/>
        <dbReference type="ChEBI" id="CHEBI:57540"/>
        <dbReference type="ChEBI" id="CHEBI:58349"/>
        <dbReference type="ChEBI" id="CHEBI:456216"/>
        <dbReference type="EC" id="2.7.1.23"/>
    </reaction>
</comment>
<comment type="cofactor">
    <cofactor evidence="1">
        <name>a divalent metal cation</name>
        <dbReference type="ChEBI" id="CHEBI:60240"/>
    </cofactor>
</comment>
<comment type="subcellular location">
    <subcellularLocation>
        <location evidence="1">Cytoplasm</location>
    </subcellularLocation>
</comment>
<comment type="similarity">
    <text evidence="1">Belongs to the NAD kinase family.</text>
</comment>
<protein>
    <recommendedName>
        <fullName evidence="1">NAD kinase</fullName>
        <ecNumber evidence="1">2.7.1.23</ecNumber>
    </recommendedName>
    <alternativeName>
        <fullName evidence="1">ATP-dependent NAD kinase</fullName>
    </alternativeName>
</protein>
<organism>
    <name type="scientific">Petrotoga mobilis (strain DSM 10674 / SJ95)</name>
    <dbReference type="NCBI Taxonomy" id="403833"/>
    <lineage>
        <taxon>Bacteria</taxon>
        <taxon>Thermotogati</taxon>
        <taxon>Thermotogota</taxon>
        <taxon>Thermotogae</taxon>
        <taxon>Petrotogales</taxon>
        <taxon>Petrotogaceae</taxon>
        <taxon>Petrotoga</taxon>
    </lineage>
</organism>
<evidence type="ECO:0000255" key="1">
    <source>
        <dbReference type="HAMAP-Rule" id="MF_00361"/>
    </source>
</evidence>
<gene>
    <name evidence="1" type="primary">nadK</name>
    <name type="ordered locus">Pmob_1354</name>
</gene>
<keyword id="KW-0067">ATP-binding</keyword>
<keyword id="KW-0963">Cytoplasm</keyword>
<keyword id="KW-0418">Kinase</keyword>
<keyword id="KW-0520">NAD</keyword>
<keyword id="KW-0521">NADP</keyword>
<keyword id="KW-0547">Nucleotide-binding</keyword>
<keyword id="KW-0808">Transferase</keyword>
<dbReference type="EC" id="2.7.1.23" evidence="1"/>
<dbReference type="EMBL" id="CP000879">
    <property type="protein sequence ID" value="ABX32058.1"/>
    <property type="molecule type" value="Genomic_DNA"/>
</dbReference>
<dbReference type="RefSeq" id="WP_012209157.1">
    <property type="nucleotide sequence ID" value="NC_010003.1"/>
</dbReference>
<dbReference type="SMR" id="A9BHU3"/>
<dbReference type="STRING" id="403833.Pmob_1354"/>
<dbReference type="KEGG" id="pmo:Pmob_1354"/>
<dbReference type="eggNOG" id="COG0061">
    <property type="taxonomic scope" value="Bacteria"/>
</dbReference>
<dbReference type="HOGENOM" id="CLU_008831_0_1_0"/>
<dbReference type="OrthoDB" id="9774737at2"/>
<dbReference type="Proteomes" id="UP000000789">
    <property type="component" value="Chromosome"/>
</dbReference>
<dbReference type="GO" id="GO:0005737">
    <property type="term" value="C:cytoplasm"/>
    <property type="evidence" value="ECO:0007669"/>
    <property type="project" value="UniProtKB-SubCell"/>
</dbReference>
<dbReference type="GO" id="GO:0005524">
    <property type="term" value="F:ATP binding"/>
    <property type="evidence" value="ECO:0007669"/>
    <property type="project" value="UniProtKB-KW"/>
</dbReference>
<dbReference type="GO" id="GO:0046872">
    <property type="term" value="F:metal ion binding"/>
    <property type="evidence" value="ECO:0007669"/>
    <property type="project" value="UniProtKB-UniRule"/>
</dbReference>
<dbReference type="GO" id="GO:0051287">
    <property type="term" value="F:NAD binding"/>
    <property type="evidence" value="ECO:0007669"/>
    <property type="project" value="UniProtKB-ARBA"/>
</dbReference>
<dbReference type="GO" id="GO:0003951">
    <property type="term" value="F:NAD+ kinase activity"/>
    <property type="evidence" value="ECO:0007669"/>
    <property type="project" value="UniProtKB-UniRule"/>
</dbReference>
<dbReference type="GO" id="GO:0019674">
    <property type="term" value="P:NAD metabolic process"/>
    <property type="evidence" value="ECO:0007669"/>
    <property type="project" value="InterPro"/>
</dbReference>
<dbReference type="GO" id="GO:0006741">
    <property type="term" value="P:NADP biosynthetic process"/>
    <property type="evidence" value="ECO:0007669"/>
    <property type="project" value="UniProtKB-UniRule"/>
</dbReference>
<dbReference type="Gene3D" id="3.40.50.10330">
    <property type="entry name" value="Probable inorganic polyphosphate/atp-NAD kinase, domain 1"/>
    <property type="match status" value="1"/>
</dbReference>
<dbReference type="Gene3D" id="2.60.200.30">
    <property type="entry name" value="Probable inorganic polyphosphate/atp-NAD kinase, domain 2"/>
    <property type="match status" value="1"/>
</dbReference>
<dbReference type="HAMAP" id="MF_00361">
    <property type="entry name" value="NAD_kinase"/>
    <property type="match status" value="1"/>
</dbReference>
<dbReference type="InterPro" id="IPR017438">
    <property type="entry name" value="ATP-NAD_kinase_N"/>
</dbReference>
<dbReference type="InterPro" id="IPR017437">
    <property type="entry name" value="ATP-NAD_kinase_PpnK-typ_C"/>
</dbReference>
<dbReference type="InterPro" id="IPR016064">
    <property type="entry name" value="NAD/diacylglycerol_kinase_sf"/>
</dbReference>
<dbReference type="InterPro" id="IPR002504">
    <property type="entry name" value="NADK"/>
</dbReference>
<dbReference type="PANTHER" id="PTHR20275">
    <property type="entry name" value="NAD KINASE"/>
    <property type="match status" value="1"/>
</dbReference>
<dbReference type="PANTHER" id="PTHR20275:SF0">
    <property type="entry name" value="NAD KINASE"/>
    <property type="match status" value="1"/>
</dbReference>
<dbReference type="Pfam" id="PF01513">
    <property type="entry name" value="NAD_kinase"/>
    <property type="match status" value="1"/>
</dbReference>
<dbReference type="Pfam" id="PF20143">
    <property type="entry name" value="NAD_kinase_C"/>
    <property type="match status" value="1"/>
</dbReference>
<dbReference type="SUPFAM" id="SSF111331">
    <property type="entry name" value="NAD kinase/diacylglycerol kinase-like"/>
    <property type="match status" value="1"/>
</dbReference>